<gene>
    <name type="primary">Zwilch</name>
</gene>
<name>ZWILC_MOUSE</name>
<reference key="1">
    <citation type="journal article" date="2005" name="Science">
        <title>The transcriptional landscape of the mammalian genome.</title>
        <authorList>
            <person name="Carninci P."/>
            <person name="Kasukawa T."/>
            <person name="Katayama S."/>
            <person name="Gough J."/>
            <person name="Frith M.C."/>
            <person name="Maeda N."/>
            <person name="Oyama R."/>
            <person name="Ravasi T."/>
            <person name="Lenhard B."/>
            <person name="Wells C."/>
            <person name="Kodzius R."/>
            <person name="Shimokawa K."/>
            <person name="Bajic V.B."/>
            <person name="Brenner S.E."/>
            <person name="Batalov S."/>
            <person name="Forrest A.R."/>
            <person name="Zavolan M."/>
            <person name="Davis M.J."/>
            <person name="Wilming L.G."/>
            <person name="Aidinis V."/>
            <person name="Allen J.E."/>
            <person name="Ambesi-Impiombato A."/>
            <person name="Apweiler R."/>
            <person name="Aturaliya R.N."/>
            <person name="Bailey T.L."/>
            <person name="Bansal M."/>
            <person name="Baxter L."/>
            <person name="Beisel K.W."/>
            <person name="Bersano T."/>
            <person name="Bono H."/>
            <person name="Chalk A.M."/>
            <person name="Chiu K.P."/>
            <person name="Choudhary V."/>
            <person name="Christoffels A."/>
            <person name="Clutterbuck D.R."/>
            <person name="Crowe M.L."/>
            <person name="Dalla E."/>
            <person name="Dalrymple B.P."/>
            <person name="de Bono B."/>
            <person name="Della Gatta G."/>
            <person name="di Bernardo D."/>
            <person name="Down T."/>
            <person name="Engstrom P."/>
            <person name="Fagiolini M."/>
            <person name="Faulkner G."/>
            <person name="Fletcher C.F."/>
            <person name="Fukushima T."/>
            <person name="Furuno M."/>
            <person name="Futaki S."/>
            <person name="Gariboldi M."/>
            <person name="Georgii-Hemming P."/>
            <person name="Gingeras T.R."/>
            <person name="Gojobori T."/>
            <person name="Green R.E."/>
            <person name="Gustincich S."/>
            <person name="Harbers M."/>
            <person name="Hayashi Y."/>
            <person name="Hensch T.K."/>
            <person name="Hirokawa N."/>
            <person name="Hill D."/>
            <person name="Huminiecki L."/>
            <person name="Iacono M."/>
            <person name="Ikeo K."/>
            <person name="Iwama A."/>
            <person name="Ishikawa T."/>
            <person name="Jakt M."/>
            <person name="Kanapin A."/>
            <person name="Katoh M."/>
            <person name="Kawasawa Y."/>
            <person name="Kelso J."/>
            <person name="Kitamura H."/>
            <person name="Kitano H."/>
            <person name="Kollias G."/>
            <person name="Krishnan S.P."/>
            <person name="Kruger A."/>
            <person name="Kummerfeld S.K."/>
            <person name="Kurochkin I.V."/>
            <person name="Lareau L.F."/>
            <person name="Lazarevic D."/>
            <person name="Lipovich L."/>
            <person name="Liu J."/>
            <person name="Liuni S."/>
            <person name="McWilliam S."/>
            <person name="Madan Babu M."/>
            <person name="Madera M."/>
            <person name="Marchionni L."/>
            <person name="Matsuda H."/>
            <person name="Matsuzawa S."/>
            <person name="Miki H."/>
            <person name="Mignone F."/>
            <person name="Miyake S."/>
            <person name="Morris K."/>
            <person name="Mottagui-Tabar S."/>
            <person name="Mulder N."/>
            <person name="Nakano N."/>
            <person name="Nakauchi H."/>
            <person name="Ng P."/>
            <person name="Nilsson R."/>
            <person name="Nishiguchi S."/>
            <person name="Nishikawa S."/>
            <person name="Nori F."/>
            <person name="Ohara O."/>
            <person name="Okazaki Y."/>
            <person name="Orlando V."/>
            <person name="Pang K.C."/>
            <person name="Pavan W.J."/>
            <person name="Pavesi G."/>
            <person name="Pesole G."/>
            <person name="Petrovsky N."/>
            <person name="Piazza S."/>
            <person name="Reed J."/>
            <person name="Reid J.F."/>
            <person name="Ring B.Z."/>
            <person name="Ringwald M."/>
            <person name="Rost B."/>
            <person name="Ruan Y."/>
            <person name="Salzberg S.L."/>
            <person name="Sandelin A."/>
            <person name="Schneider C."/>
            <person name="Schoenbach C."/>
            <person name="Sekiguchi K."/>
            <person name="Semple C.A."/>
            <person name="Seno S."/>
            <person name="Sessa L."/>
            <person name="Sheng Y."/>
            <person name="Shibata Y."/>
            <person name="Shimada H."/>
            <person name="Shimada K."/>
            <person name="Silva D."/>
            <person name="Sinclair B."/>
            <person name="Sperling S."/>
            <person name="Stupka E."/>
            <person name="Sugiura K."/>
            <person name="Sultana R."/>
            <person name="Takenaka Y."/>
            <person name="Taki K."/>
            <person name="Tammoja K."/>
            <person name="Tan S.L."/>
            <person name="Tang S."/>
            <person name="Taylor M.S."/>
            <person name="Tegner J."/>
            <person name="Teichmann S.A."/>
            <person name="Ueda H.R."/>
            <person name="van Nimwegen E."/>
            <person name="Verardo R."/>
            <person name="Wei C.L."/>
            <person name="Yagi K."/>
            <person name="Yamanishi H."/>
            <person name="Zabarovsky E."/>
            <person name="Zhu S."/>
            <person name="Zimmer A."/>
            <person name="Hide W."/>
            <person name="Bult C."/>
            <person name="Grimmond S.M."/>
            <person name="Teasdale R.D."/>
            <person name="Liu E.T."/>
            <person name="Brusic V."/>
            <person name="Quackenbush J."/>
            <person name="Wahlestedt C."/>
            <person name="Mattick J.S."/>
            <person name="Hume D.A."/>
            <person name="Kai C."/>
            <person name="Sasaki D."/>
            <person name="Tomaru Y."/>
            <person name="Fukuda S."/>
            <person name="Kanamori-Katayama M."/>
            <person name="Suzuki M."/>
            <person name="Aoki J."/>
            <person name="Arakawa T."/>
            <person name="Iida J."/>
            <person name="Imamura K."/>
            <person name="Itoh M."/>
            <person name="Kato T."/>
            <person name="Kawaji H."/>
            <person name="Kawagashira N."/>
            <person name="Kawashima T."/>
            <person name="Kojima M."/>
            <person name="Kondo S."/>
            <person name="Konno H."/>
            <person name="Nakano K."/>
            <person name="Ninomiya N."/>
            <person name="Nishio T."/>
            <person name="Okada M."/>
            <person name="Plessy C."/>
            <person name="Shibata K."/>
            <person name="Shiraki T."/>
            <person name="Suzuki S."/>
            <person name="Tagami M."/>
            <person name="Waki K."/>
            <person name="Watahiki A."/>
            <person name="Okamura-Oho Y."/>
            <person name="Suzuki H."/>
            <person name="Kawai J."/>
            <person name="Hayashizaki Y."/>
        </authorList>
    </citation>
    <scope>NUCLEOTIDE SEQUENCE [LARGE SCALE MRNA]</scope>
    <source>
        <strain>C57BL/6J</strain>
        <tissue>Testis</tissue>
        <tissue>Tongue</tissue>
    </source>
</reference>
<reference key="2">
    <citation type="journal article" date="2004" name="Genome Res.">
        <title>The status, quality, and expansion of the NIH full-length cDNA project: the Mammalian Gene Collection (MGC).</title>
        <authorList>
            <consortium name="The MGC Project Team"/>
        </authorList>
    </citation>
    <scope>NUCLEOTIDE SEQUENCE [LARGE SCALE MRNA]</scope>
    <source>
        <strain>FVB/N</strain>
        <tissue>Mammary tumor</tissue>
    </source>
</reference>
<reference key="3">
    <citation type="journal article" date="2010" name="Cell">
        <title>A tissue-specific atlas of mouse protein phosphorylation and expression.</title>
        <authorList>
            <person name="Huttlin E.L."/>
            <person name="Jedrychowski M.P."/>
            <person name="Elias J.E."/>
            <person name="Goswami T."/>
            <person name="Rad R."/>
            <person name="Beausoleil S.A."/>
            <person name="Villen J."/>
            <person name="Haas W."/>
            <person name="Sowa M.E."/>
            <person name="Gygi S.P."/>
        </authorList>
    </citation>
    <scope>IDENTIFICATION BY MASS SPECTROMETRY [LARGE SCALE ANALYSIS]</scope>
    <source>
        <tissue>Spleen</tissue>
        <tissue>Testis</tissue>
    </source>
</reference>
<dbReference type="EMBL" id="AK009559">
    <property type="protein sequence ID" value="BAB26358.2"/>
    <property type="molecule type" value="mRNA"/>
</dbReference>
<dbReference type="EMBL" id="AK019825">
    <property type="protein sequence ID" value="BAB31869.2"/>
    <property type="molecule type" value="mRNA"/>
</dbReference>
<dbReference type="EMBL" id="BC027435">
    <property type="protein sequence ID" value="AAH27435.1"/>
    <property type="molecule type" value="mRNA"/>
</dbReference>
<dbReference type="CCDS" id="CCDS23275.2"/>
<dbReference type="RefSeq" id="NP_080783.3">
    <property type="nucleotide sequence ID" value="NM_026507.4"/>
</dbReference>
<dbReference type="SMR" id="Q8R060"/>
<dbReference type="BioGRID" id="212596">
    <property type="interactions" value="19"/>
</dbReference>
<dbReference type="FunCoup" id="Q8R060">
    <property type="interactions" value="1115"/>
</dbReference>
<dbReference type="IntAct" id="Q8R060">
    <property type="interactions" value="2"/>
</dbReference>
<dbReference type="MINT" id="Q8R060"/>
<dbReference type="STRING" id="10090.ENSMUSP00000112790"/>
<dbReference type="iPTMnet" id="Q8R060"/>
<dbReference type="PhosphoSitePlus" id="Q8R060"/>
<dbReference type="PaxDb" id="10090-ENSMUSP00000112790"/>
<dbReference type="ProteomicsDB" id="275319"/>
<dbReference type="Pumba" id="Q8R060"/>
<dbReference type="DNASU" id="68014"/>
<dbReference type="Ensembl" id="ENSMUST00000122091.8">
    <property type="protein sequence ID" value="ENSMUSP00000112790.3"/>
    <property type="gene ID" value="ENSMUSG00000032400.19"/>
</dbReference>
<dbReference type="GeneID" id="68014"/>
<dbReference type="KEGG" id="mmu:68014"/>
<dbReference type="UCSC" id="uc012gva.1">
    <property type="organism name" value="mouse"/>
</dbReference>
<dbReference type="AGR" id="MGI:1915264"/>
<dbReference type="CTD" id="55055"/>
<dbReference type="MGI" id="MGI:1915264">
    <property type="gene designation" value="Zwilch"/>
</dbReference>
<dbReference type="eggNOG" id="KOG4803">
    <property type="taxonomic scope" value="Eukaryota"/>
</dbReference>
<dbReference type="GeneTree" id="ENSGT00390000013696"/>
<dbReference type="InParanoid" id="Q8R060"/>
<dbReference type="OrthoDB" id="5556307at2759"/>
<dbReference type="PhylomeDB" id="Q8R060"/>
<dbReference type="Reactome" id="R-MMU-141444">
    <property type="pathway name" value="Amplification of signal from unattached kinetochores via a MAD2 inhibitory signal"/>
</dbReference>
<dbReference type="Reactome" id="R-MMU-2467813">
    <property type="pathway name" value="Separation of Sister Chromatids"/>
</dbReference>
<dbReference type="Reactome" id="R-MMU-2500257">
    <property type="pathway name" value="Resolution of Sister Chromatid Cohesion"/>
</dbReference>
<dbReference type="Reactome" id="R-MMU-5663220">
    <property type="pathway name" value="RHO GTPases Activate Formins"/>
</dbReference>
<dbReference type="Reactome" id="R-MMU-68877">
    <property type="pathway name" value="Mitotic Prometaphase"/>
</dbReference>
<dbReference type="Reactome" id="R-MMU-9648025">
    <property type="pathway name" value="EML4 and NUDC in mitotic spindle formation"/>
</dbReference>
<dbReference type="BioGRID-ORCS" id="68014">
    <property type="hits" value="15 hits in 78 CRISPR screens"/>
</dbReference>
<dbReference type="ChiTaRS" id="Zwilch">
    <property type="organism name" value="mouse"/>
</dbReference>
<dbReference type="PRO" id="PR:Q8R060"/>
<dbReference type="Proteomes" id="UP000000589">
    <property type="component" value="Chromosome 9"/>
</dbReference>
<dbReference type="RNAct" id="Q8R060">
    <property type="molecule type" value="protein"/>
</dbReference>
<dbReference type="GO" id="GO:0000776">
    <property type="term" value="C:kinetochore"/>
    <property type="evidence" value="ECO:0000266"/>
    <property type="project" value="MGI"/>
</dbReference>
<dbReference type="GO" id="GO:1990423">
    <property type="term" value="C:RZZ complex"/>
    <property type="evidence" value="ECO:0007669"/>
    <property type="project" value="Ensembl"/>
</dbReference>
<dbReference type="GO" id="GO:0051301">
    <property type="term" value="P:cell division"/>
    <property type="evidence" value="ECO:0007669"/>
    <property type="project" value="UniProtKB-KW"/>
</dbReference>
<dbReference type="GO" id="GO:0007094">
    <property type="term" value="P:mitotic spindle assembly checkpoint signaling"/>
    <property type="evidence" value="ECO:0000250"/>
    <property type="project" value="UniProtKB"/>
</dbReference>
<dbReference type="GO" id="GO:0034501">
    <property type="term" value="P:protein localization to kinetochore"/>
    <property type="evidence" value="ECO:0007669"/>
    <property type="project" value="Ensembl"/>
</dbReference>
<dbReference type="FunFam" id="1.10.287.1880:FF:000001">
    <property type="entry name" value="Protein zwilch homolog"/>
    <property type="match status" value="1"/>
</dbReference>
<dbReference type="FunFam" id="1.20.58.730:FF:000001">
    <property type="entry name" value="Protein zwilch homolog"/>
    <property type="match status" value="1"/>
</dbReference>
<dbReference type="FunFam" id="2.20.25.230:FF:000001">
    <property type="entry name" value="protein zwilch homolog isoform X1"/>
    <property type="match status" value="1"/>
</dbReference>
<dbReference type="Gene3D" id="1.10.287.1880">
    <property type="match status" value="1"/>
</dbReference>
<dbReference type="Gene3D" id="1.20.58.730">
    <property type="match status" value="1"/>
</dbReference>
<dbReference type="Gene3D" id="2.20.25.230">
    <property type="match status" value="1"/>
</dbReference>
<dbReference type="Gene3D" id="6.10.140.520">
    <property type="match status" value="1"/>
</dbReference>
<dbReference type="Gene3D" id="6.20.270.10">
    <property type="match status" value="1"/>
</dbReference>
<dbReference type="InterPro" id="IPR018630">
    <property type="entry name" value="Zwilch"/>
</dbReference>
<dbReference type="PANTHER" id="PTHR15995">
    <property type="entry name" value="PROTEIN ZWILCH HOMOLOG"/>
    <property type="match status" value="1"/>
</dbReference>
<dbReference type="PANTHER" id="PTHR15995:SF1">
    <property type="entry name" value="PROTEIN ZWILCH HOMOLOG"/>
    <property type="match status" value="1"/>
</dbReference>
<dbReference type="Pfam" id="PF09817">
    <property type="entry name" value="Zwilch"/>
    <property type="match status" value="1"/>
</dbReference>
<proteinExistence type="evidence at protein level"/>
<comment type="function">
    <text evidence="1">Essential component of the mitotic checkpoint, which prevents cells from prematurely exiting mitosis. Required for the assembly of the dynein-dynactin and MAD1-MAD2 complexes onto kinetochores. Its function related to the spindle assembly machinery is proposed to depend on its association in the mitotic RZZ complex (By similarity).</text>
</comment>
<comment type="subunit">
    <text evidence="1">Component of the RZZ complex composed of KNTC1/ROD, ZW10 and ZWILCH; in the complex interacts directly with KNTC1/ROD (By similarity).</text>
</comment>
<comment type="subcellular location">
    <subcellularLocation>
        <location evidence="1">Chromosome</location>
        <location evidence="1">Centromere</location>
        <location evidence="1">Kinetochore</location>
    </subcellularLocation>
</comment>
<comment type="similarity">
    <text evidence="2">Belongs to the ZWILCH family.</text>
</comment>
<evidence type="ECO:0000250" key="1">
    <source>
        <dbReference type="UniProtKB" id="Q9H900"/>
    </source>
</evidence>
<evidence type="ECO:0000305" key="2"/>
<protein>
    <recommendedName>
        <fullName>Protein zwilch homolog</fullName>
    </recommendedName>
</protein>
<feature type="chain" id="PRO_0000314801" description="Protein zwilch homolog">
    <location>
        <begin position="1"/>
        <end position="589"/>
    </location>
</feature>
<feature type="modified residue" description="Phosphoserine" evidence="1">
    <location>
        <position position="88"/>
    </location>
</feature>
<feature type="sequence conflict" description="In Ref. 1; BAB26358." evidence="2" ref="1">
    <original>E</original>
    <variation>G</variation>
    <location>
        <position position="19"/>
    </location>
</feature>
<feature type="sequence conflict" description="In Ref. 1; BAB26358." evidence="2" ref="1">
    <original>D</original>
    <variation>V</variation>
    <location>
        <position position="215"/>
    </location>
</feature>
<feature type="sequence conflict" description="In Ref. 1; BAB26358." evidence="2" ref="1">
    <original>E</original>
    <variation>G</variation>
    <location>
        <position position="285"/>
    </location>
</feature>
<keyword id="KW-0131">Cell cycle</keyword>
<keyword id="KW-0132">Cell division</keyword>
<keyword id="KW-0137">Centromere</keyword>
<keyword id="KW-0158">Chromosome</keyword>
<keyword id="KW-0995">Kinetochore</keyword>
<keyword id="KW-0498">Mitosis</keyword>
<keyword id="KW-0597">Phosphoprotein</keyword>
<keyword id="KW-1185">Reference proteome</keyword>
<organism>
    <name type="scientific">Mus musculus</name>
    <name type="common">Mouse</name>
    <dbReference type="NCBI Taxonomy" id="10090"/>
    <lineage>
        <taxon>Eukaryota</taxon>
        <taxon>Metazoa</taxon>
        <taxon>Chordata</taxon>
        <taxon>Craniata</taxon>
        <taxon>Vertebrata</taxon>
        <taxon>Euteleostomi</taxon>
        <taxon>Mammalia</taxon>
        <taxon>Eutheria</taxon>
        <taxon>Euarchontoglires</taxon>
        <taxon>Glires</taxon>
        <taxon>Rodentia</taxon>
        <taxon>Myomorpha</taxon>
        <taxon>Muroidea</taxon>
        <taxon>Muridae</taxon>
        <taxon>Murinae</taxon>
        <taxon>Mus</taxon>
        <taxon>Mus</taxon>
    </lineage>
</organism>
<accession>Q8R060</accession>
<accession>Q9D2E4</accession>
<accession>Q9D761</accession>
<sequence length="589" mass="66839">MWSRMNRAAEEFYARLRQEFNEEKKGASKDPFIYEADVQVQLISKGQPSLLKTILNENDSVFLVEKVVLEKEETSQVEELQSEETAISDLSAGENIRPLALPVGRARQLIGLYTMAHNPNMTHLKIKQPVTALPPLWVRCDGSDPEGTCWLGAELITTNDIIAGVILYVLTCKADKNYSEDLENLKTSHKKRHHVSAVTARGFAQYELFKSDDLDDTVAPSQTTVTLDLSWSPVDEMLQTPPLSSTAALNIRVQSGESRGCLSHLHRELKFLLVLADGIRTGVTEWLEPLETKSALEFVQEFLNDLNKLDEFDDSTKKDKQKEAVNHDAAAVVRSMLLTVRGDLDFAEQLWCRMSSSVVSYQDLVKCFTLILQSLQRGDIQPWLHSGSNSLLSKLIHQSYHGAMDSVPLSGTTPLQMLLEIGLDKLKKDYISFFVSQELASLNHLEYFISPSVSTQEQVCRVQKLHHILEILVICMLFIKPQHELLFSLTQSCIKYYKQNPLDEQHIFQLPVRPAAVKNLYQSEKPQKWRVELSNSQKRVKTVWQLSDSSPVDHSSFHRPEFPELTLNGSLEERTAFVNMLTCSQVHFK</sequence>